<comment type="function">
    <text evidence="1">Releases the supercoiling and torsional tension of DNA, which is introduced during the DNA replication and transcription, by transiently cleaving and rejoining one strand of the DNA duplex. Introduces a single-strand break via transesterification at a target site in duplex DNA. The scissile phosphodiester is attacked by the catalytic tyrosine of the enzyme, resulting in the formation of a DNA-(5'-phosphotyrosyl)-enzyme intermediate and the expulsion of a 3'-OH DNA strand. The free DNA strand then undergoes passage around the unbroken strand, thus removing DNA supercoils. Finally, in the religation step, the DNA 3'-OH attacks the covalent intermediate to expel the active-site tyrosine and restore the DNA phosphodiester backbone.</text>
</comment>
<comment type="catalytic activity">
    <reaction evidence="1">
        <text>ATP-independent breakage of single-stranded DNA, followed by passage and rejoining.</text>
        <dbReference type="EC" id="5.6.2.1"/>
    </reaction>
</comment>
<comment type="cofactor">
    <cofactor evidence="1">
        <name>Mg(2+)</name>
        <dbReference type="ChEBI" id="CHEBI:18420"/>
    </cofactor>
</comment>
<comment type="subunit">
    <text evidence="1">Monomer.</text>
</comment>
<comment type="similarity">
    <text evidence="1">Belongs to the type IA topoisomerase family.</text>
</comment>
<comment type="sequence caution" evidence="4">
    <conflict type="erroneous initiation">
        <sequence resource="EMBL-CDS" id="AAD21553"/>
    </conflict>
</comment>
<organism>
    <name type="scientific">Zymomonas mobilis subsp. mobilis (strain ATCC 31821 / ZM4 / CP4)</name>
    <dbReference type="NCBI Taxonomy" id="264203"/>
    <lineage>
        <taxon>Bacteria</taxon>
        <taxon>Pseudomonadati</taxon>
        <taxon>Pseudomonadota</taxon>
        <taxon>Alphaproteobacteria</taxon>
        <taxon>Sphingomonadales</taxon>
        <taxon>Zymomonadaceae</taxon>
        <taxon>Zymomonas</taxon>
    </lineage>
</organism>
<sequence>MKLVVVESPAKAKTIEKYLGSGYQVLASYGHIRDLPSKDGSVNPDNGFSMVWQNYPDKAHRLKAIEDAVKESDSLILATDPDREGEAISWHILELLKTKKLLPDDVERVTFNAITKAAVTDAMAHPRQLDNDLINAYLARRALDYLVGFTLSPILWRKLPGAKSAGRVQSVALRLVVDREQEIEGFKPQEYWSVEADMEADSIGFTSRLIQWRGQKLEKLSIADKTQAEAAQSDVESGHFTVSNVETKPVSRNPQPPFTTSTLQQEAARKLGFAASHTMRLAQSLYEEGLITYMRTDGVQMDESAIAAARKTITQRYDGGYVPDKPRQYQVKAKNAQEAHEAIRPTDFSRDKAASGDHARLYELIWKRALASQMASAKLERTTVDLTDGTGQNVLRVTGQVVLFSGFLTLYEESADDNANDRDGKEGRARLPLLRAGDAPLKKEVRADQHFTQPPPRYSEASLVKKMEDLGIGRPSTYASVIQVLKDRAYVTLERNRFIPSEAGRLLTAFLERFFERYVSYDFTAGLEDSLDEISGGRADWQKVLDAFWHDFKPKTAEVMEQQPSAITAELDKFLEPWLFPDKGDGHDPRECPSCHTGRLALKGGRFGAFIACSNYPECKYTRGFGQGEDGVDDNEPVLLGYMPENSDDDGYMAFSDQGDILPANTASASETGVTDGGIAANAAFSGKGNSASHTDRDDLPFDPDEPASSTGNVASSQSRMTGDETASSGNSRDSSAHGVSTTAGIDAESQAGISNQALAGKNNAGRTAVSDNKGNNSSSTIAAARKGGSTDDNATVSDPDGDIGSGASSSGQDADNRLLSHRNGDIDSRAIPADHKDSSSDQNASHALSPDRNSDDASVSNSDKKIDSKAVSTGHDVGNAITSDNSPSDNVAHLASTPSSATSSVKVALETENNDTAASKADEQAKEEEESRKARAVTRRTGRFGPYIQLGEGKNAKRVSVPRDVNPREVDFSLASRLLALPREIGLHPESGKMIIAGTGRYGPYLNCDGKYARLSSTEELLDIDIDRAVVKLAEAAQNKGRTGATLSREPLKVFGDSPVTEKPVQLMNGRYGPYVTDGETNASLPKDTTPESLTFEEALALLEARAKMPKKKKTKKAAAKKPAAKKTTTKKAAPKKATTKTATPKSATTDNATSEDGDATPAKSPAKKAVAKKTTAKKPASKSATKKAPSSKTTAAKKTSKATPKDEVAE</sequence>
<evidence type="ECO:0000255" key="1">
    <source>
        <dbReference type="HAMAP-Rule" id="MF_00952"/>
    </source>
</evidence>
<evidence type="ECO:0000255" key="2">
    <source>
        <dbReference type="PROSITE-ProRule" id="PRU01383"/>
    </source>
</evidence>
<evidence type="ECO:0000256" key="3">
    <source>
        <dbReference type="SAM" id="MobiDB-lite"/>
    </source>
</evidence>
<evidence type="ECO:0000305" key="4"/>
<proteinExistence type="inferred from homology"/>
<reference key="1">
    <citation type="submission" date="1998-08" db="EMBL/GenBank/DDBJ databases">
        <authorList>
            <person name="Lee H.J."/>
            <person name="Kang H.S."/>
        </authorList>
    </citation>
    <scope>NUCLEOTIDE SEQUENCE [GENOMIC DNA]</scope>
    <source>
        <strain>ATCC 31821 / ZM4 / CP4</strain>
    </source>
</reference>
<reference key="2">
    <citation type="journal article" date="2005" name="Nat. Biotechnol.">
        <title>The genome sequence of the ethanologenic bacterium Zymomonas mobilis ZM4.</title>
        <authorList>
            <person name="Seo J.-S."/>
            <person name="Chong H."/>
            <person name="Park H.S."/>
            <person name="Yoon K.-O."/>
            <person name="Jung C."/>
            <person name="Kim J.J."/>
            <person name="Hong J.H."/>
            <person name="Kim H."/>
            <person name="Kim J.-H."/>
            <person name="Kil J.-I."/>
            <person name="Park C.J."/>
            <person name="Oh H.-M."/>
            <person name="Lee J.-S."/>
            <person name="Jin S.-J."/>
            <person name="Um H.-W."/>
            <person name="Lee H.-J."/>
            <person name="Oh S.-J."/>
            <person name="Kim J.Y."/>
            <person name="Kang H.L."/>
            <person name="Lee S.Y."/>
            <person name="Lee K.J."/>
            <person name="Kang H.S."/>
        </authorList>
    </citation>
    <scope>NUCLEOTIDE SEQUENCE [LARGE SCALE GENOMIC DNA]</scope>
    <source>
        <strain>ATCC 31821 / ZM4 / CP4</strain>
    </source>
</reference>
<gene>
    <name evidence="1" type="primary">topA</name>
    <name type="ordered locus">ZMO1193</name>
</gene>
<accession>Q9X3X7</accession>
<accession>Q5NN93</accession>
<feature type="chain" id="PRO_0000145175" description="DNA topoisomerase 1">
    <location>
        <begin position="1"/>
        <end position="1212"/>
    </location>
</feature>
<feature type="domain" description="Toprim" evidence="1">
    <location>
        <begin position="1"/>
        <end position="114"/>
    </location>
</feature>
<feature type="domain" description="Topo IA-type catalytic" evidence="2">
    <location>
        <begin position="130"/>
        <end position="556"/>
    </location>
</feature>
<feature type="zinc finger region" description="C4-type">
    <location>
        <begin position="592"/>
        <end position="619"/>
    </location>
</feature>
<feature type="region of interest" description="Interaction with DNA" evidence="1">
    <location>
        <begin position="164"/>
        <end position="169"/>
    </location>
</feature>
<feature type="region of interest" description="Disordered" evidence="3">
    <location>
        <begin position="687"/>
        <end position="742"/>
    </location>
</feature>
<feature type="region of interest" description="Disordered" evidence="3">
    <location>
        <begin position="758"/>
        <end position="937"/>
    </location>
</feature>
<feature type="region of interest" description="Disordered" evidence="3">
    <location>
        <begin position="1107"/>
        <end position="1212"/>
    </location>
</feature>
<feature type="compositionally biased region" description="Polar residues" evidence="3">
    <location>
        <begin position="708"/>
        <end position="742"/>
    </location>
</feature>
<feature type="compositionally biased region" description="Polar residues" evidence="3">
    <location>
        <begin position="770"/>
        <end position="782"/>
    </location>
</feature>
<feature type="compositionally biased region" description="Basic and acidic residues" evidence="3">
    <location>
        <begin position="815"/>
        <end position="840"/>
    </location>
</feature>
<feature type="compositionally biased region" description="Polar residues" evidence="3">
    <location>
        <begin position="881"/>
        <end position="890"/>
    </location>
</feature>
<feature type="compositionally biased region" description="Polar residues" evidence="3">
    <location>
        <begin position="897"/>
        <end position="906"/>
    </location>
</feature>
<feature type="compositionally biased region" description="Basic and acidic residues" evidence="3">
    <location>
        <begin position="921"/>
        <end position="934"/>
    </location>
</feature>
<feature type="compositionally biased region" description="Basic residues" evidence="3">
    <location>
        <begin position="1109"/>
        <end position="1140"/>
    </location>
</feature>
<feature type="compositionally biased region" description="Low complexity" evidence="3">
    <location>
        <begin position="1141"/>
        <end position="1151"/>
    </location>
</feature>
<feature type="compositionally biased region" description="Basic residues" evidence="3">
    <location>
        <begin position="1167"/>
        <end position="1182"/>
    </location>
</feature>
<feature type="compositionally biased region" description="Low complexity" evidence="3">
    <location>
        <begin position="1183"/>
        <end position="1199"/>
    </location>
</feature>
<feature type="active site" description="O-(5'-phospho-DNA)-tyrosine intermediate" evidence="2">
    <location>
        <position position="293"/>
    </location>
</feature>
<feature type="binding site" evidence="1">
    <location>
        <position position="7"/>
    </location>
    <ligand>
        <name>Mg(2+)</name>
        <dbReference type="ChEBI" id="CHEBI:18420"/>
        <note>catalytic</note>
    </ligand>
</feature>
<feature type="binding site" evidence="1">
    <location>
        <position position="80"/>
    </location>
    <ligand>
        <name>Mg(2+)</name>
        <dbReference type="ChEBI" id="CHEBI:18420"/>
        <note>catalytic</note>
    </ligand>
</feature>
<feature type="site" description="Interaction with DNA" evidence="1">
    <location>
        <position position="31"/>
    </location>
</feature>
<feature type="site" description="Interaction with DNA" evidence="1">
    <location>
        <position position="140"/>
    </location>
</feature>
<feature type="site" description="Interaction with DNA" evidence="1">
    <location>
        <position position="141"/>
    </location>
</feature>
<feature type="site" description="Interaction with DNA" evidence="1">
    <location>
        <position position="144"/>
    </location>
</feature>
<feature type="site" description="Interaction with DNA" evidence="1">
    <location>
        <position position="156"/>
    </location>
</feature>
<feature type="site" description="Interaction with DNA" evidence="1">
    <location>
        <position position="295"/>
    </location>
</feature>
<feature type="site" description="Interaction with DNA" evidence="1">
    <location>
        <position position="488"/>
    </location>
</feature>
<feature type="sequence conflict" description="In Ref. 1; AAD21553." evidence="4" ref="1">
    <original>VA</original>
    <variation>AR</variation>
    <location>
        <begin position="171"/>
        <end position="172"/>
    </location>
</feature>
<feature type="sequence conflict" description="In Ref. 1; AAD21553." evidence="4" ref="1">
    <original>V</original>
    <variation>F</variation>
    <location>
        <position position="445"/>
    </location>
</feature>
<feature type="sequence conflict" description="In Ref. 1; AAD21553." evidence="4" ref="1">
    <original>V</original>
    <variation>F</variation>
    <location>
        <position position="481"/>
    </location>
</feature>
<feature type="sequence conflict" description="In Ref. 1; AAD21553." evidence="4" ref="1">
    <original>S</original>
    <variation>F</variation>
    <location>
        <position position="1017"/>
    </location>
</feature>
<feature type="sequence conflict" description="In Ref. 1; AAD21553." evidence="4" ref="1">
    <original>K</original>
    <variation>I</variation>
    <location>
        <position position="1174"/>
    </location>
</feature>
<protein>
    <recommendedName>
        <fullName evidence="1">DNA topoisomerase 1</fullName>
        <ecNumber evidence="1">5.6.2.1</ecNumber>
    </recommendedName>
    <alternativeName>
        <fullName evidence="1">DNA topoisomerase I</fullName>
    </alternativeName>
    <alternativeName>
        <fullName>Omega-protein</fullName>
    </alternativeName>
    <alternativeName>
        <fullName>Relaxing enzyme</fullName>
    </alternativeName>
    <alternativeName>
        <fullName>Swivelase</fullName>
    </alternativeName>
    <alternativeName>
        <fullName>Untwisting enzyme</fullName>
    </alternativeName>
</protein>
<name>TOP1_ZYMMO</name>
<keyword id="KW-0238">DNA-binding</keyword>
<keyword id="KW-0413">Isomerase</keyword>
<keyword id="KW-0460">Magnesium</keyword>
<keyword id="KW-0479">Metal-binding</keyword>
<keyword id="KW-1185">Reference proteome</keyword>
<keyword id="KW-0799">Topoisomerase</keyword>
<keyword id="KW-0862">Zinc</keyword>
<keyword id="KW-0863">Zinc-finger</keyword>
<dbReference type="EC" id="5.6.2.1" evidence="1"/>
<dbReference type="EMBL" id="AF088896">
    <property type="protein sequence ID" value="AAD21553.1"/>
    <property type="status" value="ALT_INIT"/>
    <property type="molecule type" value="Genomic_DNA"/>
</dbReference>
<dbReference type="EMBL" id="AE008692">
    <property type="protein sequence ID" value="AAV89817.2"/>
    <property type="molecule type" value="Genomic_DNA"/>
</dbReference>
<dbReference type="RefSeq" id="WP_011241016.1">
    <property type="nucleotide sequence ID" value="NZ_CP035711.1"/>
</dbReference>
<dbReference type="SMR" id="Q9X3X7"/>
<dbReference type="STRING" id="264203.ZMO1193"/>
<dbReference type="KEGG" id="zmo:ZMO1193"/>
<dbReference type="eggNOG" id="COG0550">
    <property type="taxonomic scope" value="Bacteria"/>
</dbReference>
<dbReference type="eggNOG" id="COG1754">
    <property type="taxonomic scope" value="Bacteria"/>
</dbReference>
<dbReference type="HOGENOM" id="CLU_002929_0_2_5"/>
<dbReference type="Proteomes" id="UP000001173">
    <property type="component" value="Chromosome"/>
</dbReference>
<dbReference type="GO" id="GO:0005694">
    <property type="term" value="C:chromosome"/>
    <property type="evidence" value="ECO:0007669"/>
    <property type="project" value="InterPro"/>
</dbReference>
<dbReference type="GO" id="GO:0003677">
    <property type="term" value="F:DNA binding"/>
    <property type="evidence" value="ECO:0007669"/>
    <property type="project" value="UniProtKB-KW"/>
</dbReference>
<dbReference type="GO" id="GO:0003917">
    <property type="term" value="F:DNA topoisomerase type I (single strand cut, ATP-independent) activity"/>
    <property type="evidence" value="ECO:0007669"/>
    <property type="project" value="UniProtKB-UniRule"/>
</dbReference>
<dbReference type="GO" id="GO:0008270">
    <property type="term" value="F:zinc ion binding"/>
    <property type="evidence" value="ECO:0007669"/>
    <property type="project" value="UniProtKB-KW"/>
</dbReference>
<dbReference type="GO" id="GO:0006265">
    <property type="term" value="P:DNA topological change"/>
    <property type="evidence" value="ECO:0007669"/>
    <property type="project" value="UniProtKB-UniRule"/>
</dbReference>
<dbReference type="CDD" id="cd00186">
    <property type="entry name" value="TOP1Ac"/>
    <property type="match status" value="1"/>
</dbReference>
<dbReference type="CDD" id="cd03363">
    <property type="entry name" value="TOPRIM_TopoIA_TopoI"/>
    <property type="match status" value="1"/>
</dbReference>
<dbReference type="Gene3D" id="3.40.50.140">
    <property type="match status" value="1"/>
</dbReference>
<dbReference type="Gene3D" id="3.30.65.10">
    <property type="entry name" value="Bacterial Topoisomerase I, domain 1"/>
    <property type="match status" value="1"/>
</dbReference>
<dbReference type="Gene3D" id="1.10.460.10">
    <property type="entry name" value="Topoisomerase I, domain 2"/>
    <property type="match status" value="1"/>
</dbReference>
<dbReference type="Gene3D" id="2.70.20.10">
    <property type="entry name" value="Topoisomerase I, domain 3"/>
    <property type="match status" value="1"/>
</dbReference>
<dbReference type="Gene3D" id="1.10.290.10">
    <property type="entry name" value="Topoisomerase I, domain 4"/>
    <property type="match status" value="1"/>
</dbReference>
<dbReference type="HAMAP" id="MF_00952">
    <property type="entry name" value="Topoisom_1_prok"/>
    <property type="match status" value="1"/>
</dbReference>
<dbReference type="InterPro" id="IPR000380">
    <property type="entry name" value="Topo_IA"/>
</dbReference>
<dbReference type="InterPro" id="IPR003601">
    <property type="entry name" value="Topo_IA_2"/>
</dbReference>
<dbReference type="InterPro" id="IPR023406">
    <property type="entry name" value="Topo_IA_AS"/>
</dbReference>
<dbReference type="InterPro" id="IPR013497">
    <property type="entry name" value="Topo_IA_cen"/>
</dbReference>
<dbReference type="InterPro" id="IPR013824">
    <property type="entry name" value="Topo_IA_cen_sub1"/>
</dbReference>
<dbReference type="InterPro" id="IPR013825">
    <property type="entry name" value="Topo_IA_cen_sub2"/>
</dbReference>
<dbReference type="InterPro" id="IPR013826">
    <property type="entry name" value="Topo_IA_cen_sub3"/>
</dbReference>
<dbReference type="InterPro" id="IPR023405">
    <property type="entry name" value="Topo_IA_core_domain"/>
</dbReference>
<dbReference type="InterPro" id="IPR003602">
    <property type="entry name" value="Topo_IA_DNA-bd_dom"/>
</dbReference>
<dbReference type="InterPro" id="IPR013498">
    <property type="entry name" value="Topo_IA_Znf"/>
</dbReference>
<dbReference type="InterPro" id="IPR005733">
    <property type="entry name" value="TopoI_bac-type"/>
</dbReference>
<dbReference type="InterPro" id="IPR028612">
    <property type="entry name" value="Topoisom_1_IA"/>
</dbReference>
<dbReference type="InterPro" id="IPR025589">
    <property type="entry name" value="Toprim_C_rpt"/>
</dbReference>
<dbReference type="InterPro" id="IPR006171">
    <property type="entry name" value="TOPRIM_dom"/>
</dbReference>
<dbReference type="InterPro" id="IPR034149">
    <property type="entry name" value="TOPRIM_TopoI"/>
</dbReference>
<dbReference type="NCBIfam" id="TIGR01051">
    <property type="entry name" value="topA_bact"/>
    <property type="match status" value="1"/>
</dbReference>
<dbReference type="PANTHER" id="PTHR42785:SF1">
    <property type="entry name" value="DNA TOPOISOMERASE"/>
    <property type="match status" value="1"/>
</dbReference>
<dbReference type="PANTHER" id="PTHR42785">
    <property type="entry name" value="DNA TOPOISOMERASE, TYPE IA, CORE"/>
    <property type="match status" value="1"/>
</dbReference>
<dbReference type="Pfam" id="PF01131">
    <property type="entry name" value="Topoisom_bac"/>
    <property type="match status" value="1"/>
</dbReference>
<dbReference type="Pfam" id="PF01751">
    <property type="entry name" value="Toprim"/>
    <property type="match status" value="1"/>
</dbReference>
<dbReference type="Pfam" id="PF13368">
    <property type="entry name" value="Toprim_C_rpt"/>
    <property type="match status" value="3"/>
</dbReference>
<dbReference type="Pfam" id="PF01396">
    <property type="entry name" value="Zn_ribbon_Top1"/>
    <property type="match status" value="1"/>
</dbReference>
<dbReference type="PRINTS" id="PR00417">
    <property type="entry name" value="PRTPISMRASEI"/>
</dbReference>
<dbReference type="SMART" id="SM00437">
    <property type="entry name" value="TOP1Ac"/>
    <property type="match status" value="1"/>
</dbReference>
<dbReference type="SMART" id="SM00436">
    <property type="entry name" value="TOP1Bc"/>
    <property type="match status" value="1"/>
</dbReference>
<dbReference type="SMART" id="SM00493">
    <property type="entry name" value="TOPRIM"/>
    <property type="match status" value="1"/>
</dbReference>
<dbReference type="SUPFAM" id="SSF56712">
    <property type="entry name" value="Prokaryotic type I DNA topoisomerase"/>
    <property type="match status" value="1"/>
</dbReference>
<dbReference type="SUPFAM" id="SSF57783">
    <property type="entry name" value="Zinc beta-ribbon"/>
    <property type="match status" value="1"/>
</dbReference>
<dbReference type="PROSITE" id="PS00396">
    <property type="entry name" value="TOPO_IA_1"/>
    <property type="match status" value="1"/>
</dbReference>
<dbReference type="PROSITE" id="PS52039">
    <property type="entry name" value="TOPO_IA_2"/>
    <property type="match status" value="1"/>
</dbReference>
<dbReference type="PROSITE" id="PS50880">
    <property type="entry name" value="TOPRIM"/>
    <property type="match status" value="1"/>
</dbReference>